<accession>Q95ZY1</accession>
<dbReference type="EMBL" id="FO080688">
    <property type="protein sequence ID" value="CCD65816.1"/>
    <property type="molecule type" value="Genomic_DNA"/>
</dbReference>
<dbReference type="RefSeq" id="NP_494964.2">
    <property type="nucleotide sequence ID" value="NM_062563.4"/>
</dbReference>
<dbReference type="BioGRID" id="56277">
    <property type="interactions" value="2"/>
</dbReference>
<dbReference type="FunCoup" id="Q95ZY1">
    <property type="interactions" value="6"/>
</dbReference>
<dbReference type="STRING" id="6239.C27D6.9.1"/>
<dbReference type="PaxDb" id="6239-C27D6.9"/>
<dbReference type="UCSC" id="C27D6.9">
    <property type="organism name" value="c. elegans"/>
</dbReference>
<dbReference type="WormBase" id="C27D6.9">
    <property type="protein sequence ID" value="CE38151"/>
    <property type="gene ID" value="WBGene00005067"/>
    <property type="gene designation" value="srb-2"/>
</dbReference>
<dbReference type="eggNOG" id="ENOG502RT5J">
    <property type="taxonomic scope" value="Eukaryota"/>
</dbReference>
<dbReference type="HOGENOM" id="CLU_045882_1_0_1"/>
<dbReference type="InParanoid" id="Q95ZY1"/>
<dbReference type="OMA" id="ECQLANE"/>
<dbReference type="PhylomeDB" id="Q95ZY1"/>
<dbReference type="PRO" id="PR:Q95ZY1"/>
<dbReference type="Proteomes" id="UP000001940">
    <property type="component" value="Chromosome II"/>
</dbReference>
<dbReference type="GO" id="GO:0016020">
    <property type="term" value="C:membrane"/>
    <property type="evidence" value="ECO:0007669"/>
    <property type="project" value="UniProtKB-SubCell"/>
</dbReference>
<dbReference type="GO" id="GO:0004888">
    <property type="term" value="F:transmembrane signaling receptor activity"/>
    <property type="evidence" value="ECO:0007669"/>
    <property type="project" value="InterPro"/>
</dbReference>
<dbReference type="GO" id="GO:0007606">
    <property type="term" value="P:sensory perception of chemical stimulus"/>
    <property type="evidence" value="ECO:0007669"/>
    <property type="project" value="InterPro"/>
</dbReference>
<dbReference type="InterPro" id="IPR002184">
    <property type="entry name" value="7TM_GPCR_serpentine_rcpt_Srb"/>
</dbReference>
<dbReference type="PANTHER" id="PTHR31216:SF12">
    <property type="entry name" value="SERPENTINE RECEPTOR CLASS BETA-1-RELATED"/>
    <property type="match status" value="1"/>
</dbReference>
<dbReference type="PANTHER" id="PTHR31216">
    <property type="entry name" value="SERPENTINE RECEPTOR CLASS BETA-1-RELATED-RELATED"/>
    <property type="match status" value="1"/>
</dbReference>
<dbReference type="Pfam" id="PF02175">
    <property type="entry name" value="7TM_GPCR_Srb"/>
    <property type="match status" value="1"/>
</dbReference>
<dbReference type="PRINTS" id="PR00699">
    <property type="entry name" value="TMPROTEINSRB"/>
</dbReference>
<sequence length="347" mass="40146">MNHIQILEYENECQLANEVTYHPVYRIAQLWTFVVSILAIPALYIFLMKRILPLPFHGNIKFLLVCYFSASFVFAVLLAFLFSYHVVAPLFITSMCDLIIRPSLYKVGNLSLTLFMTIQMIMPLGFSIERFIALSMTKSYENVRTFLGPLLVFTLIGIDLALLYHVFRDEKFEDSFISFALVPETSAIPFNSYFWELLYAEIGNFICNCIFLLVHSKFKARFLHQQRSLSVRYLLEEISQTSKFTLIVSFTHLLFVGWYLIATIFVRTIGEDFFGGYIHYTVARGVHITVPTYNLTIVFVGIKALSFMNLRRQNNVQSKVQIRSTGAEGARNYEDAIANYWNFVSRT</sequence>
<proteinExistence type="inferred from homology"/>
<organism>
    <name type="scientific">Caenorhabditis elegans</name>
    <dbReference type="NCBI Taxonomy" id="6239"/>
    <lineage>
        <taxon>Eukaryota</taxon>
        <taxon>Metazoa</taxon>
        <taxon>Ecdysozoa</taxon>
        <taxon>Nematoda</taxon>
        <taxon>Chromadorea</taxon>
        <taxon>Rhabditida</taxon>
        <taxon>Rhabditina</taxon>
        <taxon>Rhabditomorpha</taxon>
        <taxon>Rhabditoidea</taxon>
        <taxon>Rhabditidae</taxon>
        <taxon>Peloderinae</taxon>
        <taxon>Caenorhabditis</taxon>
    </lineage>
</organism>
<feature type="chain" id="PRO_0000104497" description="Serpentine receptor class beta-2">
    <location>
        <begin position="1"/>
        <end position="347"/>
    </location>
</feature>
<feature type="transmembrane region" description="Helical" evidence="1">
    <location>
        <begin position="27"/>
        <end position="47"/>
    </location>
</feature>
<feature type="transmembrane region" description="Helical" evidence="1">
    <location>
        <begin position="62"/>
        <end position="82"/>
    </location>
</feature>
<feature type="transmembrane region" description="Helical" evidence="1">
    <location>
        <begin position="108"/>
        <end position="128"/>
    </location>
</feature>
<feature type="transmembrane region" description="Helical" evidence="1">
    <location>
        <begin position="146"/>
        <end position="166"/>
    </location>
</feature>
<feature type="transmembrane region" description="Helical" evidence="1">
    <location>
        <begin position="194"/>
        <end position="214"/>
    </location>
</feature>
<feature type="transmembrane region" description="Helical" evidence="1">
    <location>
        <begin position="246"/>
        <end position="266"/>
    </location>
</feature>
<feature type="transmembrane region" description="Helical" evidence="1">
    <location>
        <begin position="288"/>
        <end position="308"/>
    </location>
</feature>
<evidence type="ECO:0000255" key="1"/>
<evidence type="ECO:0000305" key="2"/>
<keyword id="KW-0472">Membrane</keyword>
<keyword id="KW-1185">Reference proteome</keyword>
<keyword id="KW-0812">Transmembrane</keyword>
<keyword id="KW-1133">Transmembrane helix</keyword>
<protein>
    <recommendedName>
        <fullName>Serpentine receptor class beta-2</fullName>
        <shortName>Protein srb-2</shortName>
    </recommendedName>
</protein>
<gene>
    <name type="primary">srb-2</name>
    <name type="ORF">C27D6.9</name>
</gene>
<name>SRB2_CAEEL</name>
<comment type="subcellular location">
    <subcellularLocation>
        <location evidence="2">Membrane</location>
        <topology evidence="2">Multi-pass membrane protein</topology>
    </subcellularLocation>
</comment>
<comment type="similarity">
    <text evidence="2">Belongs to the nematode receptor-like protein srb family.</text>
</comment>
<reference key="1">
    <citation type="journal article" date="1998" name="Science">
        <title>Genome sequence of the nematode C. elegans: a platform for investigating biology.</title>
        <authorList>
            <consortium name="The C. elegans sequencing consortium"/>
        </authorList>
    </citation>
    <scope>NUCLEOTIDE SEQUENCE [LARGE SCALE GENOMIC DNA]</scope>
    <source>
        <strain>Bristol N2</strain>
    </source>
</reference>